<proteinExistence type="inferred from homology"/>
<reference key="1">
    <citation type="journal article" date="2004" name="Genome Res.">
        <title>Genome sequence of Haloarcula marismortui: a halophilic archaeon from the Dead Sea.</title>
        <authorList>
            <person name="Baliga N.S."/>
            <person name="Bonneau R."/>
            <person name="Facciotti M.T."/>
            <person name="Pan M."/>
            <person name="Glusman G."/>
            <person name="Deutsch E.W."/>
            <person name="Shannon P."/>
            <person name="Chiu Y."/>
            <person name="Weng R.S."/>
            <person name="Gan R.R."/>
            <person name="Hung P."/>
            <person name="Date S.V."/>
            <person name="Marcotte E."/>
            <person name="Hood L."/>
            <person name="Ng W.V."/>
        </authorList>
    </citation>
    <scope>NUCLEOTIDE SEQUENCE [LARGE SCALE GENOMIC DNA]</scope>
    <source>
        <strain>ATCC 43049 / DSM 3752 / JCM 8966 / VKM B-1809</strain>
    </source>
</reference>
<accession>Q5UY41</accession>
<gene>
    <name type="ordered locus">rrnAC3100</name>
</gene>
<keyword id="KW-0349">Heme</keyword>
<keyword id="KW-0408">Iron</keyword>
<keyword id="KW-0479">Metal-binding</keyword>
<keyword id="KW-1185">Reference proteome</keyword>
<feature type="chain" id="PRO_0000294060" description="Putative heme-binding protein rrnAC3100">
    <location>
        <begin position="1"/>
        <end position="669"/>
    </location>
</feature>
<feature type="domain" description="ABM">
    <location>
        <begin position="579"/>
        <end position="667"/>
    </location>
</feature>
<feature type="region of interest" description="Disordered" evidence="2">
    <location>
        <begin position="260"/>
        <end position="351"/>
    </location>
</feature>
<feature type="region of interest" description="Disordered" evidence="2">
    <location>
        <begin position="451"/>
        <end position="477"/>
    </location>
</feature>
<feature type="binding site" description="axial binding residue" evidence="1">
    <location>
        <position position="181"/>
    </location>
    <ligand>
        <name>heme</name>
        <dbReference type="ChEBI" id="CHEBI:30413"/>
    </ligand>
    <ligandPart>
        <name>Fe</name>
        <dbReference type="ChEBI" id="CHEBI:18248"/>
    </ligandPart>
</feature>
<organism>
    <name type="scientific">Haloarcula marismortui (strain ATCC 43049 / DSM 3752 / JCM 8966 / VKM B-1809)</name>
    <name type="common">Halobacterium marismortui</name>
    <dbReference type="NCBI Taxonomy" id="272569"/>
    <lineage>
        <taxon>Archaea</taxon>
        <taxon>Methanobacteriati</taxon>
        <taxon>Methanobacteriota</taxon>
        <taxon>Stenosarchaea group</taxon>
        <taxon>Halobacteria</taxon>
        <taxon>Halobacteriales</taxon>
        <taxon>Haloarculaceae</taxon>
        <taxon>Haloarcula</taxon>
    </lineage>
</organism>
<name>Y3100_HALMA</name>
<evidence type="ECO:0000250" key="1"/>
<evidence type="ECO:0000256" key="2">
    <source>
        <dbReference type="SAM" id="MobiDB-lite"/>
    </source>
</evidence>
<evidence type="ECO:0000305" key="3"/>
<sequence length="669" mass="73534">MDQRKPPATEEGWYALHDCRSIDWDAWREAPQRVRDRALSEGIGFLDAYEAVEDADEGQTAVYTVMGHKADIMILHLRPTMGDLDAAERHFEQTEFAAFTEQEFSYVSVTEASGYTEKSREYFEGEVDDDSGLAQYIQARLHPDVPDEEFVCFYPMSKRRQPDQNWYDTSFEERAAHIKRHGDIGRGYGSEVSQMIAGSIGFDDWEWGITLWSDDMRHIKELLTEMRFDPSTSQFAEFGPFYVGRKFDPSELPAVLAGQRVPTDDASVPETPADVAEHEHAPADAGASHSHAEEPTASGAQTGAHAGGDTDSHGGTHPGSASEGDHPHSEESSDEDDSGSSSSSGGRPDVSADFEEIDDAAQRLGRLGLHEGDAYDAGDYALVFHSSADAEDIVDDVSDLESNFDHYDRHVQTAVRADSGQTYVVSIWTAKDAAETAAGFLKDIDGVDEQLGGSLGEGVEGSETADDSDAQAAESSQSIRETLESAGVYAGQPHGEDVYALVVYSEANAETLDEEVTDLRSAFERYDTHVQTTVYGDTDGDVAAVASLWDTEDAAQTASDYLTDLPGVVGRHGEGDGFGTMGMFYTVKPEYHEDFVEKFDTVGGLLKEMDGHRETSLLFNHDDENDMFIASQWDSQKDAMAFFRSDDFSETVDWGRDVLADRPRHVFLA</sequence>
<protein>
    <recommendedName>
        <fullName>Putative heme-binding protein rrnAC3100</fullName>
    </recommendedName>
</protein>
<dbReference type="EMBL" id="AY596297">
    <property type="protein sequence ID" value="AAV47812.1"/>
    <property type="status" value="ALT_INIT"/>
    <property type="molecule type" value="Genomic_DNA"/>
</dbReference>
<dbReference type="RefSeq" id="WP_011224619.1">
    <property type="nucleotide sequence ID" value="NC_006396.1"/>
</dbReference>
<dbReference type="SMR" id="Q5UY41"/>
<dbReference type="STRING" id="272569.rrnAC3100"/>
<dbReference type="PaxDb" id="272569-rrnAC3100"/>
<dbReference type="EnsemblBacteria" id="AAV47812">
    <property type="protein sequence ID" value="AAV47812"/>
    <property type="gene ID" value="rrnAC3100"/>
</dbReference>
<dbReference type="GeneID" id="40153911"/>
<dbReference type="KEGG" id="hma:rrnAC3100"/>
<dbReference type="PATRIC" id="fig|272569.17.peg.3641"/>
<dbReference type="eggNOG" id="arCOG03031">
    <property type="taxonomic scope" value="Archaea"/>
</dbReference>
<dbReference type="HOGENOM" id="CLU_470618_0_0_2"/>
<dbReference type="Proteomes" id="UP000001169">
    <property type="component" value="Chromosome I"/>
</dbReference>
<dbReference type="GO" id="GO:0020037">
    <property type="term" value="F:heme binding"/>
    <property type="evidence" value="ECO:0007669"/>
    <property type="project" value="InterPro"/>
</dbReference>
<dbReference type="GO" id="GO:0046872">
    <property type="term" value="F:metal ion binding"/>
    <property type="evidence" value="ECO:0007669"/>
    <property type="project" value="UniProtKB-KW"/>
</dbReference>
<dbReference type="GO" id="GO:0016491">
    <property type="term" value="F:oxidoreductase activity"/>
    <property type="evidence" value="ECO:0007669"/>
    <property type="project" value="InterPro"/>
</dbReference>
<dbReference type="Gene3D" id="3.30.70.100">
    <property type="match status" value="1"/>
</dbReference>
<dbReference type="Gene3D" id="3.30.70.1030">
    <property type="entry name" value="Apc35880, domain 1"/>
    <property type="match status" value="2"/>
</dbReference>
<dbReference type="InterPro" id="IPR007138">
    <property type="entry name" value="ABM_dom"/>
</dbReference>
<dbReference type="InterPro" id="IPR010644">
    <property type="entry name" value="ChdC/CLD"/>
</dbReference>
<dbReference type="InterPro" id="IPR011008">
    <property type="entry name" value="Dimeric_a/b-barrel"/>
</dbReference>
<dbReference type="NCBIfam" id="NF007124">
    <property type="entry name" value="PRK09565.1"/>
    <property type="match status" value="1"/>
</dbReference>
<dbReference type="NCBIfam" id="NF008913">
    <property type="entry name" value="PRK12276.1"/>
    <property type="match status" value="1"/>
</dbReference>
<dbReference type="PANTHER" id="PTHR36843:SF1">
    <property type="entry name" value="COPROHEME DECARBOXYLASE"/>
    <property type="match status" value="1"/>
</dbReference>
<dbReference type="PANTHER" id="PTHR36843">
    <property type="entry name" value="HEME-DEPENDENT PEROXIDASE YWFI-RELATED"/>
    <property type="match status" value="1"/>
</dbReference>
<dbReference type="Pfam" id="PF03992">
    <property type="entry name" value="ABM"/>
    <property type="match status" value="1"/>
</dbReference>
<dbReference type="Pfam" id="PF06778">
    <property type="entry name" value="Chlor_dismutase"/>
    <property type="match status" value="1"/>
</dbReference>
<dbReference type="SUPFAM" id="SSF54909">
    <property type="entry name" value="Dimeric alpha+beta barrel"/>
    <property type="match status" value="2"/>
</dbReference>
<dbReference type="PROSITE" id="PS51725">
    <property type="entry name" value="ABM"/>
    <property type="match status" value="1"/>
</dbReference>
<comment type="similarity">
    <text evidence="3">In the N-terminal section; belongs to the ChdC family.</text>
</comment>
<comment type="sequence caution" evidence="3">
    <conflict type="erroneous initiation">
        <sequence resource="EMBL-CDS" id="AAV47812"/>
    </conflict>
</comment>